<accession>Q044G3</accession>
<organism>
    <name type="scientific">Lactobacillus gasseri (strain ATCC 33323 / DSM 20243 / BCRC 14619 / CIP 102991 / JCM 1131 / KCTC 3163 / NCIMB 11718 / NCTC 13722 / AM63)</name>
    <dbReference type="NCBI Taxonomy" id="324831"/>
    <lineage>
        <taxon>Bacteria</taxon>
        <taxon>Bacillati</taxon>
        <taxon>Bacillota</taxon>
        <taxon>Bacilli</taxon>
        <taxon>Lactobacillales</taxon>
        <taxon>Lactobacillaceae</taxon>
        <taxon>Lactobacillus</taxon>
    </lineage>
</organism>
<proteinExistence type="inferred from homology"/>
<feature type="chain" id="PRO_1000007262" description="Large ribosomal subunit protein bL28">
    <location>
        <begin position="1"/>
        <end position="61"/>
    </location>
</feature>
<name>RL28_LACGA</name>
<sequence>MAKDIITGRKTVFGNKRSKALNSVRRSWKPNLQKVRILVDGKPKRVWVSARALKSGKVKRA</sequence>
<evidence type="ECO:0000255" key="1">
    <source>
        <dbReference type="HAMAP-Rule" id="MF_00373"/>
    </source>
</evidence>
<evidence type="ECO:0000305" key="2"/>
<dbReference type="EMBL" id="CP000413">
    <property type="protein sequence ID" value="ABJ60159.1"/>
    <property type="molecule type" value="Genomic_DNA"/>
</dbReference>
<dbReference type="RefSeq" id="WP_003647522.1">
    <property type="nucleotide sequence ID" value="NZ_WBMG01000005.1"/>
</dbReference>
<dbReference type="SMR" id="Q044G3"/>
<dbReference type="GeneID" id="82847170"/>
<dbReference type="KEGG" id="lga:LGAS_0768"/>
<dbReference type="HOGENOM" id="CLU_064548_7_1_9"/>
<dbReference type="BioCyc" id="LGAS324831:G1G6Y-762-MONOMER"/>
<dbReference type="Proteomes" id="UP000000664">
    <property type="component" value="Chromosome"/>
</dbReference>
<dbReference type="GO" id="GO:1990904">
    <property type="term" value="C:ribonucleoprotein complex"/>
    <property type="evidence" value="ECO:0007669"/>
    <property type="project" value="UniProtKB-KW"/>
</dbReference>
<dbReference type="GO" id="GO:0005840">
    <property type="term" value="C:ribosome"/>
    <property type="evidence" value="ECO:0007669"/>
    <property type="project" value="UniProtKB-KW"/>
</dbReference>
<dbReference type="GO" id="GO:0003735">
    <property type="term" value="F:structural constituent of ribosome"/>
    <property type="evidence" value="ECO:0007669"/>
    <property type="project" value="InterPro"/>
</dbReference>
<dbReference type="GO" id="GO:0006412">
    <property type="term" value="P:translation"/>
    <property type="evidence" value="ECO:0007669"/>
    <property type="project" value="UniProtKB-UniRule"/>
</dbReference>
<dbReference type="Gene3D" id="2.30.170.40">
    <property type="entry name" value="Ribosomal protein L28/L24"/>
    <property type="match status" value="1"/>
</dbReference>
<dbReference type="HAMAP" id="MF_00373">
    <property type="entry name" value="Ribosomal_bL28"/>
    <property type="match status" value="1"/>
</dbReference>
<dbReference type="InterPro" id="IPR050096">
    <property type="entry name" value="Bacterial_rp_bL28"/>
</dbReference>
<dbReference type="InterPro" id="IPR026569">
    <property type="entry name" value="Ribosomal_bL28"/>
</dbReference>
<dbReference type="InterPro" id="IPR034704">
    <property type="entry name" value="Ribosomal_bL28/bL31-like_sf"/>
</dbReference>
<dbReference type="InterPro" id="IPR001383">
    <property type="entry name" value="Ribosomal_bL28_bact-type"/>
</dbReference>
<dbReference type="InterPro" id="IPR037147">
    <property type="entry name" value="Ribosomal_bL28_sf"/>
</dbReference>
<dbReference type="NCBIfam" id="TIGR00009">
    <property type="entry name" value="L28"/>
    <property type="match status" value="1"/>
</dbReference>
<dbReference type="PANTHER" id="PTHR39080">
    <property type="entry name" value="50S RIBOSOMAL PROTEIN L28"/>
    <property type="match status" value="1"/>
</dbReference>
<dbReference type="PANTHER" id="PTHR39080:SF1">
    <property type="entry name" value="LARGE RIBOSOMAL SUBUNIT PROTEIN BL28A"/>
    <property type="match status" value="1"/>
</dbReference>
<dbReference type="Pfam" id="PF00830">
    <property type="entry name" value="Ribosomal_L28"/>
    <property type="match status" value="1"/>
</dbReference>
<dbReference type="SUPFAM" id="SSF143800">
    <property type="entry name" value="L28p-like"/>
    <property type="match status" value="1"/>
</dbReference>
<keyword id="KW-0687">Ribonucleoprotein</keyword>
<keyword id="KW-0689">Ribosomal protein</keyword>
<reference key="1">
    <citation type="journal article" date="2006" name="Proc. Natl. Acad. Sci. U.S.A.">
        <title>Comparative genomics of the lactic acid bacteria.</title>
        <authorList>
            <person name="Makarova K.S."/>
            <person name="Slesarev A."/>
            <person name="Wolf Y.I."/>
            <person name="Sorokin A."/>
            <person name="Mirkin B."/>
            <person name="Koonin E.V."/>
            <person name="Pavlov A."/>
            <person name="Pavlova N."/>
            <person name="Karamychev V."/>
            <person name="Polouchine N."/>
            <person name="Shakhova V."/>
            <person name="Grigoriev I."/>
            <person name="Lou Y."/>
            <person name="Rohksar D."/>
            <person name="Lucas S."/>
            <person name="Huang K."/>
            <person name="Goodstein D.M."/>
            <person name="Hawkins T."/>
            <person name="Plengvidhya V."/>
            <person name="Welker D."/>
            <person name="Hughes J."/>
            <person name="Goh Y."/>
            <person name="Benson A."/>
            <person name="Baldwin K."/>
            <person name="Lee J.-H."/>
            <person name="Diaz-Muniz I."/>
            <person name="Dosti B."/>
            <person name="Smeianov V."/>
            <person name="Wechter W."/>
            <person name="Barabote R."/>
            <person name="Lorca G."/>
            <person name="Altermann E."/>
            <person name="Barrangou R."/>
            <person name="Ganesan B."/>
            <person name="Xie Y."/>
            <person name="Rawsthorne H."/>
            <person name="Tamir D."/>
            <person name="Parker C."/>
            <person name="Breidt F."/>
            <person name="Broadbent J.R."/>
            <person name="Hutkins R."/>
            <person name="O'Sullivan D."/>
            <person name="Steele J."/>
            <person name="Unlu G."/>
            <person name="Saier M.H. Jr."/>
            <person name="Klaenhammer T."/>
            <person name="Richardson P."/>
            <person name="Kozyavkin S."/>
            <person name="Weimer B.C."/>
            <person name="Mills D.A."/>
        </authorList>
    </citation>
    <scope>NUCLEOTIDE SEQUENCE [LARGE SCALE GENOMIC DNA]</scope>
    <source>
        <strain>ATCC 33323 / DSM 20243 / BCRC 14619 / CIP 102991 / JCM 1131 / KCTC 3163 / NCIMB 11718 / NCTC 13722 / AM63</strain>
    </source>
</reference>
<gene>
    <name evidence="1" type="primary">rpmB</name>
    <name type="ordered locus">LGAS_0768</name>
</gene>
<protein>
    <recommendedName>
        <fullName evidence="1">Large ribosomal subunit protein bL28</fullName>
    </recommendedName>
    <alternativeName>
        <fullName evidence="2">50S ribosomal protein L28</fullName>
    </alternativeName>
</protein>
<comment type="similarity">
    <text evidence="1">Belongs to the bacterial ribosomal protein bL28 family.</text>
</comment>